<proteinExistence type="inferred from homology"/>
<reference key="1">
    <citation type="journal article" date="2004" name="Nat. Biotechnol.">
        <title>The genome sequence of the anaerobic, sulfate-reducing bacterium Desulfovibrio vulgaris Hildenborough.</title>
        <authorList>
            <person name="Heidelberg J.F."/>
            <person name="Seshadri R."/>
            <person name="Haveman S.A."/>
            <person name="Hemme C.L."/>
            <person name="Paulsen I.T."/>
            <person name="Kolonay J.F."/>
            <person name="Eisen J.A."/>
            <person name="Ward N.L."/>
            <person name="Methe B.A."/>
            <person name="Brinkac L.M."/>
            <person name="Daugherty S.C."/>
            <person name="DeBoy R.T."/>
            <person name="Dodson R.J."/>
            <person name="Durkin A.S."/>
            <person name="Madupu R."/>
            <person name="Nelson W.C."/>
            <person name="Sullivan S.A."/>
            <person name="Fouts D.E."/>
            <person name="Haft D.H."/>
            <person name="Selengut J."/>
            <person name="Peterson J.D."/>
            <person name="Davidsen T.M."/>
            <person name="Zafar N."/>
            <person name="Zhou L."/>
            <person name="Radune D."/>
            <person name="Dimitrov G."/>
            <person name="Hance M."/>
            <person name="Tran K."/>
            <person name="Khouri H.M."/>
            <person name="Gill J."/>
            <person name="Utterback T.R."/>
            <person name="Feldblyum T.V."/>
            <person name="Wall J.D."/>
            <person name="Voordouw G."/>
            <person name="Fraser C.M."/>
        </authorList>
    </citation>
    <scope>NUCLEOTIDE SEQUENCE [LARGE SCALE GENOMIC DNA]</scope>
    <source>
        <strain>ATCC 29579 / DSM 644 / CCUG 34227 / NCIMB 8303 / VKM B-1760 / Hildenborough</strain>
    </source>
</reference>
<evidence type="ECO:0000255" key="1">
    <source>
        <dbReference type="HAMAP-Rule" id="MF_00501"/>
    </source>
</evidence>
<evidence type="ECO:0000305" key="2"/>
<organism>
    <name type="scientific">Nitratidesulfovibrio vulgaris (strain ATCC 29579 / DSM 644 / CCUG 34227 / NCIMB 8303 / VKM B-1760 / Hildenborough)</name>
    <name type="common">Desulfovibrio vulgaris</name>
    <dbReference type="NCBI Taxonomy" id="882"/>
    <lineage>
        <taxon>Bacteria</taxon>
        <taxon>Pseudomonadati</taxon>
        <taxon>Thermodesulfobacteriota</taxon>
        <taxon>Desulfovibrionia</taxon>
        <taxon>Desulfovibrionales</taxon>
        <taxon>Desulfovibrionaceae</taxon>
        <taxon>Nitratidesulfovibrio</taxon>
    </lineage>
</organism>
<protein>
    <recommendedName>
        <fullName evidence="1">Large ribosomal subunit protein bL31</fullName>
    </recommendedName>
    <alternativeName>
        <fullName evidence="2">50S ribosomal protein L31</fullName>
    </alternativeName>
</protein>
<feature type="chain" id="PRO_0000173101" description="Large ribosomal subunit protein bL31">
    <location>
        <begin position="1"/>
        <end position="71"/>
    </location>
</feature>
<feature type="binding site" evidence="1">
    <location>
        <position position="16"/>
    </location>
    <ligand>
        <name>Zn(2+)</name>
        <dbReference type="ChEBI" id="CHEBI:29105"/>
    </ligand>
</feature>
<feature type="binding site" evidence="1">
    <location>
        <position position="18"/>
    </location>
    <ligand>
        <name>Zn(2+)</name>
        <dbReference type="ChEBI" id="CHEBI:29105"/>
    </ligand>
</feature>
<feature type="binding site" evidence="1">
    <location>
        <position position="37"/>
    </location>
    <ligand>
        <name>Zn(2+)</name>
        <dbReference type="ChEBI" id="CHEBI:29105"/>
    </ligand>
</feature>
<feature type="binding site" evidence="1">
    <location>
        <position position="40"/>
    </location>
    <ligand>
        <name>Zn(2+)</name>
        <dbReference type="ChEBI" id="CHEBI:29105"/>
    </ligand>
</feature>
<accession>Q727E3</accession>
<dbReference type="EMBL" id="AE017285">
    <property type="protein sequence ID" value="AAS97384.1"/>
    <property type="molecule type" value="Genomic_DNA"/>
</dbReference>
<dbReference type="RefSeq" id="WP_010940172.1">
    <property type="nucleotide sequence ID" value="NC_002937.3"/>
</dbReference>
<dbReference type="RefSeq" id="YP_012124.1">
    <property type="nucleotide sequence ID" value="NC_002937.3"/>
</dbReference>
<dbReference type="SMR" id="Q727E3"/>
<dbReference type="STRING" id="882.DVU_2912"/>
<dbReference type="PaxDb" id="882-DVU_2912"/>
<dbReference type="EnsemblBacteria" id="AAS97384">
    <property type="protein sequence ID" value="AAS97384"/>
    <property type="gene ID" value="DVU_2912"/>
</dbReference>
<dbReference type="KEGG" id="dvu:DVU_2912"/>
<dbReference type="PATRIC" id="fig|882.5.peg.2634"/>
<dbReference type="eggNOG" id="COG0254">
    <property type="taxonomic scope" value="Bacteria"/>
</dbReference>
<dbReference type="HOGENOM" id="CLU_114306_4_0_7"/>
<dbReference type="OrthoDB" id="9803251at2"/>
<dbReference type="PhylomeDB" id="Q727E3"/>
<dbReference type="Proteomes" id="UP000002194">
    <property type="component" value="Chromosome"/>
</dbReference>
<dbReference type="GO" id="GO:1990904">
    <property type="term" value="C:ribonucleoprotein complex"/>
    <property type="evidence" value="ECO:0007669"/>
    <property type="project" value="UniProtKB-KW"/>
</dbReference>
<dbReference type="GO" id="GO:0005840">
    <property type="term" value="C:ribosome"/>
    <property type="evidence" value="ECO:0007669"/>
    <property type="project" value="UniProtKB-KW"/>
</dbReference>
<dbReference type="GO" id="GO:0046872">
    <property type="term" value="F:metal ion binding"/>
    <property type="evidence" value="ECO:0007669"/>
    <property type="project" value="UniProtKB-KW"/>
</dbReference>
<dbReference type="GO" id="GO:0019843">
    <property type="term" value="F:rRNA binding"/>
    <property type="evidence" value="ECO:0007669"/>
    <property type="project" value="UniProtKB-KW"/>
</dbReference>
<dbReference type="GO" id="GO:0003735">
    <property type="term" value="F:structural constituent of ribosome"/>
    <property type="evidence" value="ECO:0007669"/>
    <property type="project" value="InterPro"/>
</dbReference>
<dbReference type="GO" id="GO:0006412">
    <property type="term" value="P:translation"/>
    <property type="evidence" value="ECO:0007669"/>
    <property type="project" value="UniProtKB-UniRule"/>
</dbReference>
<dbReference type="Gene3D" id="4.10.830.30">
    <property type="entry name" value="Ribosomal protein L31"/>
    <property type="match status" value="1"/>
</dbReference>
<dbReference type="HAMAP" id="MF_00501">
    <property type="entry name" value="Ribosomal_bL31_1"/>
    <property type="match status" value="1"/>
</dbReference>
<dbReference type="InterPro" id="IPR034704">
    <property type="entry name" value="Ribosomal_bL28/bL31-like_sf"/>
</dbReference>
<dbReference type="InterPro" id="IPR002150">
    <property type="entry name" value="Ribosomal_bL31"/>
</dbReference>
<dbReference type="InterPro" id="IPR027491">
    <property type="entry name" value="Ribosomal_bL31_A"/>
</dbReference>
<dbReference type="InterPro" id="IPR042105">
    <property type="entry name" value="Ribosomal_bL31_sf"/>
</dbReference>
<dbReference type="NCBIfam" id="TIGR00105">
    <property type="entry name" value="L31"/>
    <property type="match status" value="1"/>
</dbReference>
<dbReference type="NCBIfam" id="NF000612">
    <property type="entry name" value="PRK00019.1"/>
    <property type="match status" value="1"/>
</dbReference>
<dbReference type="NCBIfam" id="NF001809">
    <property type="entry name" value="PRK00528.1"/>
    <property type="match status" value="1"/>
</dbReference>
<dbReference type="PANTHER" id="PTHR33280">
    <property type="entry name" value="50S RIBOSOMAL PROTEIN L31, CHLOROPLASTIC"/>
    <property type="match status" value="1"/>
</dbReference>
<dbReference type="PANTHER" id="PTHR33280:SF6">
    <property type="entry name" value="LARGE RIBOSOMAL SUBUNIT PROTEIN BL31A"/>
    <property type="match status" value="1"/>
</dbReference>
<dbReference type="Pfam" id="PF01197">
    <property type="entry name" value="Ribosomal_L31"/>
    <property type="match status" value="1"/>
</dbReference>
<dbReference type="PRINTS" id="PR01249">
    <property type="entry name" value="RIBOSOMALL31"/>
</dbReference>
<dbReference type="SUPFAM" id="SSF143800">
    <property type="entry name" value="L28p-like"/>
    <property type="match status" value="1"/>
</dbReference>
<dbReference type="PROSITE" id="PS01143">
    <property type="entry name" value="RIBOSOMAL_L31"/>
    <property type="match status" value="1"/>
</dbReference>
<comment type="function">
    <text evidence="1">Binds the 23S rRNA.</text>
</comment>
<comment type="cofactor">
    <cofactor evidence="1">
        <name>Zn(2+)</name>
        <dbReference type="ChEBI" id="CHEBI:29105"/>
    </cofactor>
    <text evidence="1">Binds 1 zinc ion per subunit.</text>
</comment>
<comment type="subunit">
    <text evidence="1">Part of the 50S ribosomal subunit.</text>
</comment>
<comment type="similarity">
    <text evidence="1">Belongs to the bacterial ribosomal protein bL31 family. Type A subfamily.</text>
</comment>
<sequence>MKDNIHPTVYKATMNCACGYQAEVLSTKGENVHVEICSNCHPFYTGKQRLIDTAGRIDRFRKKYAKFGEEK</sequence>
<gene>
    <name evidence="1" type="primary">rpmE</name>
    <name type="ordered locus">DVU_2912</name>
</gene>
<name>RL31_NITV2</name>
<keyword id="KW-0479">Metal-binding</keyword>
<keyword id="KW-1185">Reference proteome</keyword>
<keyword id="KW-0687">Ribonucleoprotein</keyword>
<keyword id="KW-0689">Ribosomal protein</keyword>
<keyword id="KW-0694">RNA-binding</keyword>
<keyword id="KW-0699">rRNA-binding</keyword>
<keyword id="KW-0862">Zinc</keyword>